<name>RAPI_BACSU</name>
<protein>
    <recommendedName>
        <fullName evidence="5">Response regulator aspartate phosphatase I</fullName>
        <ecNumber evidence="4">3.1.3.-</ecNumber>
    </recommendedName>
</protein>
<reference key="1">
    <citation type="submission" date="1997-03" db="EMBL/GenBank/DDBJ databases">
        <title>A 148 kbp sequence of the region between 35 and 47 degree of the Bacillus subtilis genome.</title>
        <authorList>
            <person name="Kasahara Y."/>
            <person name="Nakai S."/>
            <person name="Lee S."/>
            <person name="Sadaie Y."/>
            <person name="Ogasawara N."/>
        </authorList>
    </citation>
    <scope>NUCLEOTIDE SEQUENCE [GENOMIC DNA]</scope>
    <source>
        <strain>168</strain>
    </source>
</reference>
<reference key="2">
    <citation type="journal article" date="1997" name="Nature">
        <title>The complete genome sequence of the Gram-positive bacterium Bacillus subtilis.</title>
        <authorList>
            <person name="Kunst F."/>
            <person name="Ogasawara N."/>
            <person name="Moszer I."/>
            <person name="Albertini A.M."/>
            <person name="Alloni G."/>
            <person name="Azevedo V."/>
            <person name="Bertero M.G."/>
            <person name="Bessieres P."/>
            <person name="Bolotin A."/>
            <person name="Borchert S."/>
            <person name="Borriss R."/>
            <person name="Boursier L."/>
            <person name="Brans A."/>
            <person name="Braun M."/>
            <person name="Brignell S.C."/>
            <person name="Bron S."/>
            <person name="Brouillet S."/>
            <person name="Bruschi C.V."/>
            <person name="Caldwell B."/>
            <person name="Capuano V."/>
            <person name="Carter N.M."/>
            <person name="Choi S.-K."/>
            <person name="Codani J.-J."/>
            <person name="Connerton I.F."/>
            <person name="Cummings N.J."/>
            <person name="Daniel R.A."/>
            <person name="Denizot F."/>
            <person name="Devine K.M."/>
            <person name="Duesterhoeft A."/>
            <person name="Ehrlich S.D."/>
            <person name="Emmerson P.T."/>
            <person name="Entian K.-D."/>
            <person name="Errington J."/>
            <person name="Fabret C."/>
            <person name="Ferrari E."/>
            <person name="Foulger D."/>
            <person name="Fritz C."/>
            <person name="Fujita M."/>
            <person name="Fujita Y."/>
            <person name="Fuma S."/>
            <person name="Galizzi A."/>
            <person name="Galleron N."/>
            <person name="Ghim S.-Y."/>
            <person name="Glaser P."/>
            <person name="Goffeau A."/>
            <person name="Golightly E.J."/>
            <person name="Grandi G."/>
            <person name="Guiseppi G."/>
            <person name="Guy B.J."/>
            <person name="Haga K."/>
            <person name="Haiech J."/>
            <person name="Harwood C.R."/>
            <person name="Henaut A."/>
            <person name="Hilbert H."/>
            <person name="Holsappel S."/>
            <person name="Hosono S."/>
            <person name="Hullo M.-F."/>
            <person name="Itaya M."/>
            <person name="Jones L.-M."/>
            <person name="Joris B."/>
            <person name="Karamata D."/>
            <person name="Kasahara Y."/>
            <person name="Klaerr-Blanchard M."/>
            <person name="Klein C."/>
            <person name="Kobayashi Y."/>
            <person name="Koetter P."/>
            <person name="Koningstein G."/>
            <person name="Krogh S."/>
            <person name="Kumano M."/>
            <person name="Kurita K."/>
            <person name="Lapidus A."/>
            <person name="Lardinois S."/>
            <person name="Lauber J."/>
            <person name="Lazarevic V."/>
            <person name="Lee S.-M."/>
            <person name="Levine A."/>
            <person name="Liu H."/>
            <person name="Masuda S."/>
            <person name="Mauel C."/>
            <person name="Medigue C."/>
            <person name="Medina N."/>
            <person name="Mellado R.P."/>
            <person name="Mizuno M."/>
            <person name="Moestl D."/>
            <person name="Nakai S."/>
            <person name="Noback M."/>
            <person name="Noone D."/>
            <person name="O'Reilly M."/>
            <person name="Ogawa K."/>
            <person name="Ogiwara A."/>
            <person name="Oudega B."/>
            <person name="Park S.-H."/>
            <person name="Parro V."/>
            <person name="Pohl T.M."/>
            <person name="Portetelle D."/>
            <person name="Porwollik S."/>
            <person name="Prescott A.M."/>
            <person name="Presecan E."/>
            <person name="Pujic P."/>
            <person name="Purnelle B."/>
            <person name="Rapoport G."/>
            <person name="Rey M."/>
            <person name="Reynolds S."/>
            <person name="Rieger M."/>
            <person name="Rivolta C."/>
            <person name="Rocha E."/>
            <person name="Roche B."/>
            <person name="Rose M."/>
            <person name="Sadaie Y."/>
            <person name="Sato T."/>
            <person name="Scanlan E."/>
            <person name="Schleich S."/>
            <person name="Schroeter R."/>
            <person name="Scoffone F."/>
            <person name="Sekiguchi J."/>
            <person name="Sekowska A."/>
            <person name="Seror S.J."/>
            <person name="Serror P."/>
            <person name="Shin B.-S."/>
            <person name="Soldo B."/>
            <person name="Sorokin A."/>
            <person name="Tacconi E."/>
            <person name="Takagi T."/>
            <person name="Takahashi H."/>
            <person name="Takemaru K."/>
            <person name="Takeuchi M."/>
            <person name="Tamakoshi A."/>
            <person name="Tanaka T."/>
            <person name="Terpstra P."/>
            <person name="Tognoni A."/>
            <person name="Tosato V."/>
            <person name="Uchiyama S."/>
            <person name="Vandenbol M."/>
            <person name="Vannier F."/>
            <person name="Vassarotti A."/>
            <person name="Viari A."/>
            <person name="Wambutt R."/>
            <person name="Wedler E."/>
            <person name="Wedler H."/>
            <person name="Weitzenegger T."/>
            <person name="Winters P."/>
            <person name="Wipat A."/>
            <person name="Yamamoto H."/>
            <person name="Yamane K."/>
            <person name="Yasumoto K."/>
            <person name="Yata K."/>
            <person name="Yoshida K."/>
            <person name="Yoshikawa H.-F."/>
            <person name="Zumstein E."/>
            <person name="Yoshikawa H."/>
            <person name="Danchin A."/>
        </authorList>
    </citation>
    <scope>NUCLEOTIDE SEQUENCE [LARGE SCALE GENOMIC DNA]</scope>
    <source>
        <strain>168</strain>
    </source>
</reference>
<reference key="3">
    <citation type="journal article" date="2005" name="Proc. Natl. Acad. Sci. U.S.A.">
        <title>Regulation of a Bacillus subtilis mobile genetic element by intercellular signaling and the global DNA damage response.</title>
        <authorList>
            <person name="Auchtung J.M."/>
            <person name="Lee C.A."/>
            <person name="Monson R.E."/>
            <person name="Lehman A.P."/>
            <person name="Grossman A.D."/>
        </authorList>
    </citation>
    <scope>FUNCTION</scope>
    <scope>ACTIVITY REGULATION</scope>
    <scope>INDUCTION</scope>
</reference>
<reference key="4">
    <citation type="journal article" date="2011" name="J. Bacteriol.">
        <title>Regulation of horizontal gene transfer in Bacillus subtilis by activation of a conserved site-specific protease.</title>
        <authorList>
            <person name="Bose B."/>
            <person name="Grossman A.D."/>
        </authorList>
    </citation>
    <scope>FUNCTION</scope>
</reference>
<reference evidence="6" key="5">
    <citation type="journal article" date="2013" name="PLoS Biol.">
        <title>Conformational change-induced repeat domain expansion regulates Rap phosphatase quorum-sensing signal receptors.</title>
        <authorList>
            <person name="Parashar V."/>
            <person name="Jeffrey P.D."/>
            <person name="Neiditch M.B."/>
        </authorList>
    </citation>
    <scope>X-RAY CRYSTALLOGRAPHY (2.44 ANGSTROMS)</scope>
    <scope>FUNCTION</scope>
    <scope>CATALYTIC ACTIVITY</scope>
    <scope>ACTIVITY REGULATION</scope>
    <scope>DOMAIN</scope>
</reference>
<dbReference type="EC" id="3.1.3.-" evidence="4"/>
<dbReference type="EMBL" id="AB001488">
    <property type="protein sequence ID" value="BAA19338.1"/>
    <property type="molecule type" value="Genomic_DNA"/>
</dbReference>
<dbReference type="EMBL" id="AL009126">
    <property type="protein sequence ID" value="CAB12308.1"/>
    <property type="molecule type" value="Genomic_DNA"/>
</dbReference>
<dbReference type="PIR" id="D69689">
    <property type="entry name" value="D69689"/>
</dbReference>
<dbReference type="RefSeq" id="NP_388382.1">
    <property type="nucleotide sequence ID" value="NC_000964.3"/>
</dbReference>
<dbReference type="RefSeq" id="WP_009966637.1">
    <property type="nucleotide sequence ID" value="NZ_OZ025638.1"/>
</dbReference>
<dbReference type="PDB" id="4I1A">
    <property type="method" value="X-ray"/>
    <property type="resolution" value="2.44 A"/>
    <property type="chains" value="A/B=1-391"/>
</dbReference>
<dbReference type="PDBsum" id="4I1A"/>
<dbReference type="SMR" id="P96649"/>
<dbReference type="DIP" id="DIP-60167N"/>
<dbReference type="FunCoup" id="P96649">
    <property type="interactions" value="23"/>
</dbReference>
<dbReference type="IntAct" id="P96649">
    <property type="interactions" value="1"/>
</dbReference>
<dbReference type="STRING" id="224308.BSU05010"/>
<dbReference type="PaxDb" id="224308-BSU05010"/>
<dbReference type="DNASU" id="938127"/>
<dbReference type="EnsemblBacteria" id="CAB12308">
    <property type="protein sequence ID" value="CAB12308"/>
    <property type="gene ID" value="BSU_05010"/>
</dbReference>
<dbReference type="GeneID" id="938127"/>
<dbReference type="KEGG" id="bsu:BSU05010"/>
<dbReference type="PATRIC" id="fig|224308.179.peg.532"/>
<dbReference type="eggNOG" id="COG0457">
    <property type="taxonomic scope" value="Bacteria"/>
</dbReference>
<dbReference type="InParanoid" id="P96649"/>
<dbReference type="OrthoDB" id="2921462at2"/>
<dbReference type="PhylomeDB" id="P96649"/>
<dbReference type="BioCyc" id="BSUB:BSU05010-MONOMER"/>
<dbReference type="EvolutionaryTrace" id="P96649"/>
<dbReference type="Proteomes" id="UP000001570">
    <property type="component" value="Chromosome"/>
</dbReference>
<dbReference type="GO" id="GO:0005737">
    <property type="term" value="C:cytoplasm"/>
    <property type="evidence" value="ECO:0007669"/>
    <property type="project" value="UniProtKB-SubCell"/>
</dbReference>
<dbReference type="GO" id="GO:0004721">
    <property type="term" value="F:phosphoprotein phosphatase activity"/>
    <property type="evidence" value="ECO:0007669"/>
    <property type="project" value="UniProtKB-KW"/>
</dbReference>
<dbReference type="Gene3D" id="1.25.40.10">
    <property type="entry name" value="Tetratricopeptide repeat domain"/>
    <property type="match status" value="2"/>
</dbReference>
<dbReference type="InterPro" id="IPR011990">
    <property type="entry name" value="TPR-like_helical_dom_sf"/>
</dbReference>
<dbReference type="InterPro" id="IPR019734">
    <property type="entry name" value="TPR_rpt"/>
</dbReference>
<dbReference type="Pfam" id="PF18801">
    <property type="entry name" value="RapH_N"/>
    <property type="match status" value="1"/>
</dbReference>
<dbReference type="Pfam" id="PF13424">
    <property type="entry name" value="TPR_12"/>
    <property type="match status" value="1"/>
</dbReference>
<dbReference type="SMART" id="SM00028">
    <property type="entry name" value="TPR"/>
    <property type="match status" value="4"/>
</dbReference>
<dbReference type="SUPFAM" id="SSF48452">
    <property type="entry name" value="TPR-like"/>
    <property type="match status" value="1"/>
</dbReference>
<dbReference type="PROSITE" id="PS50293">
    <property type="entry name" value="TPR_REGION"/>
    <property type="match status" value="1"/>
</dbReference>
<keyword id="KW-0002">3D-structure</keyword>
<keyword id="KW-0963">Cytoplasm</keyword>
<keyword id="KW-0378">Hydrolase</keyword>
<keyword id="KW-0904">Protein phosphatase</keyword>
<keyword id="KW-1185">Reference proteome</keyword>
<keyword id="KW-0677">Repeat</keyword>
<keyword id="KW-0802">TPR repeat</keyword>
<organism>
    <name type="scientific">Bacillus subtilis (strain 168)</name>
    <dbReference type="NCBI Taxonomy" id="224308"/>
    <lineage>
        <taxon>Bacteria</taxon>
        <taxon>Bacillati</taxon>
        <taxon>Bacillota</taxon>
        <taxon>Bacilli</taxon>
        <taxon>Bacillales</taxon>
        <taxon>Bacillaceae</taxon>
        <taxon>Bacillus</taxon>
    </lineage>
</organism>
<proteinExistence type="evidence at protein level"/>
<evidence type="ECO:0000255" key="1"/>
<evidence type="ECO:0000269" key="2">
    <source>
    </source>
</evidence>
<evidence type="ECO:0000269" key="3">
    <source>
    </source>
</evidence>
<evidence type="ECO:0000269" key="4">
    <source>
    </source>
</evidence>
<evidence type="ECO:0000305" key="5"/>
<evidence type="ECO:0007744" key="6">
    <source>
        <dbReference type="PDB" id="4I1A"/>
    </source>
</evidence>
<evidence type="ECO:0007829" key="7">
    <source>
        <dbReference type="PDB" id="4I1A"/>
    </source>
</evidence>
<sequence>MRGVFLDKDKIPYDLVTKKLNEWYTSIKNDQVEQAEIIKTEVEKELLNMEENQDALLYYQLLEFRHEIMLSYMKSKEIEDLNNAYETIKEIEKQGQLTGMLEYYFYFFKGMYEFRRKELISAISAYRIAESKLSEVEDEIEKAEFFFKVSYVYYYMKQTYFSMNYANRALKIFREYEEYAVQTVRCQFIVAGNLIDSLEYERALEQFLKSLEISKESNIEHLIAMSHMNIGICYDELKEYKKASQHLILALEIFEKSKHSFLTKTLFTLTYVEAKQQNYNVALIYFRKGRFIADKSDDKEYSAKFKILEGLFFSDGETQLIKNAFSYLASRKMFADVENFSIEVADYFHEQGNLMLSNEYYRMSIEARRKIKKGEIIDENQPDSIGSSDFK</sequence>
<gene>
    <name type="primary">rapI</name>
    <name type="synonym">yddL</name>
    <name type="ordered locus">BSU05010</name>
</gene>
<comment type="function">
    <text evidence="2 3 4">Activates ICEBs1 gene expression, excision and transfer by inactivating the ICEBs1 repressor protein ImmR (PubMed:16105942, PubMed:21036995). RapI-mediated induction likely results from an increase in the specific activity of the protease ImmA, which mediates proteolysis of ImmR (PubMed:21036995). In addition, is involved in regulation of sporulation (PubMed:23526881). Acts as a phosphatase that specifically dephosphorylates the sporulation initiation phosphotransferase Spo0F and inhibits its activity (PubMed:23526881).</text>
</comment>
<comment type="activity regulation">
    <text evidence="2 4">Inhibited by PhrI.</text>
</comment>
<comment type="subcellular location">
    <subcellularLocation>
        <location evidence="5">Cytoplasm</location>
    </subcellularLocation>
</comment>
<comment type="induction">
    <text evidence="2">Expression is stimulated by conditions of low nutrient availability and high cell density.</text>
</comment>
<comment type="domain">
    <text evidence="4">Contains a small N-terminal 3-helix bundle domain and a large C-terminal TPR domain, connected by a linker region.</text>
</comment>
<comment type="miscellaneous">
    <text evidence="2">Encoded by the mobile genetic element ICEBs1.</text>
</comment>
<comment type="similarity">
    <text evidence="5">Belongs to the Rap family.</text>
</comment>
<accession>P96649</accession>
<feature type="chain" id="PRO_0000106443" description="Response regulator aspartate phosphatase I">
    <location>
        <begin position="1"/>
        <end position="391"/>
    </location>
</feature>
<feature type="repeat" description="TPR 1" evidence="5">
    <location>
        <begin position="62"/>
        <end position="95"/>
    </location>
</feature>
<feature type="repeat" description="TPR 2" evidence="1">
    <location>
        <begin position="150"/>
        <end position="183"/>
    </location>
</feature>
<feature type="repeat" description="TPR 3" evidence="1">
    <location>
        <begin position="184"/>
        <end position="217"/>
    </location>
</feature>
<feature type="repeat" description="TPR 4" evidence="1">
    <location>
        <begin position="224"/>
        <end position="257"/>
    </location>
</feature>
<feature type="repeat" description="TPR 5" evidence="1">
    <location>
        <begin position="275"/>
        <end position="311"/>
    </location>
</feature>
<feature type="repeat" description="TPR 6" evidence="1">
    <location>
        <begin position="338"/>
        <end position="371"/>
    </location>
</feature>
<feature type="helix" evidence="7">
    <location>
        <begin position="15"/>
        <end position="28"/>
    </location>
</feature>
<feature type="helix" evidence="7">
    <location>
        <begin position="32"/>
        <end position="45"/>
    </location>
</feature>
<feature type="helix" evidence="7">
    <location>
        <begin position="46"/>
        <end position="48"/>
    </location>
</feature>
<feature type="helix" evidence="7">
    <location>
        <begin position="53"/>
        <end position="70"/>
    </location>
</feature>
<feature type="helix" evidence="7">
    <location>
        <begin position="79"/>
        <end position="93"/>
    </location>
</feature>
<feature type="helix" evidence="7">
    <location>
        <begin position="102"/>
        <end position="115"/>
    </location>
</feature>
<feature type="helix" evidence="7">
    <location>
        <begin position="119"/>
        <end position="129"/>
    </location>
</feature>
<feature type="helix" evidence="7">
    <location>
        <begin position="132"/>
        <end position="135"/>
    </location>
</feature>
<feature type="helix" evidence="7">
    <location>
        <begin position="139"/>
        <end position="155"/>
    </location>
</feature>
<feature type="helix" evidence="7">
    <location>
        <begin position="159"/>
        <end position="173"/>
    </location>
</feature>
<feature type="helix" evidence="7">
    <location>
        <begin position="177"/>
        <end position="179"/>
    </location>
</feature>
<feature type="helix" evidence="7">
    <location>
        <begin position="180"/>
        <end position="196"/>
    </location>
</feature>
<feature type="helix" evidence="7">
    <location>
        <begin position="200"/>
        <end position="215"/>
    </location>
</feature>
<feature type="turn" evidence="7">
    <location>
        <begin position="216"/>
        <end position="218"/>
    </location>
</feature>
<feature type="helix" evidence="7">
    <location>
        <begin position="220"/>
        <end position="236"/>
    </location>
</feature>
<feature type="helix" evidence="7">
    <location>
        <begin position="240"/>
        <end position="257"/>
    </location>
</feature>
<feature type="helix" evidence="7">
    <location>
        <begin position="261"/>
        <end position="275"/>
    </location>
</feature>
<feature type="helix" evidence="7">
    <location>
        <begin position="279"/>
        <end position="295"/>
    </location>
</feature>
<feature type="helix" evidence="7">
    <location>
        <begin position="299"/>
        <end position="312"/>
    </location>
</feature>
<feature type="strand" evidence="7">
    <location>
        <begin position="314"/>
        <end position="316"/>
    </location>
</feature>
<feature type="helix" evidence="7">
    <location>
        <begin position="318"/>
        <end position="330"/>
    </location>
</feature>
<feature type="helix" evidence="7">
    <location>
        <begin position="334"/>
        <end position="351"/>
    </location>
</feature>
<feature type="helix" evidence="7">
    <location>
        <begin position="354"/>
        <end position="373"/>
    </location>
</feature>